<gene>
    <name type="ORF">DDB_G0290491</name>
</gene>
<protein>
    <recommendedName>
        <fullName>Autophagy-related protein 8-like protein DDB_G0290491</fullName>
    </recommendedName>
</protein>
<sequence>MALLSKSFKQEYSLEKRKLISSKIRNRYKDRLPIIVERAANSDVPDINKKKFLAPSNMVITNFIMEIRKHLDDSDHNEQKAIFLFVNKNNLPPSSQLLSSIYDAHKDEDGFLYICYSGENTFGSDI</sequence>
<comment type="subcellular location">
    <subcellularLocation>
        <location evidence="1">Membrane</location>
        <topology evidence="1">Lipid-anchor</topology>
    </subcellularLocation>
</comment>
<comment type="similarity">
    <text evidence="2">Belongs to the ATG8 family.</text>
</comment>
<name>ATG8L_DICDI</name>
<accession>Q54G11</accession>
<evidence type="ECO:0000250" key="1"/>
<evidence type="ECO:0000305" key="2"/>
<proteinExistence type="inferred from homology"/>
<dbReference type="EMBL" id="AAFI02000164">
    <property type="protein sequence ID" value="EAL62106.1"/>
    <property type="molecule type" value="Genomic_DNA"/>
</dbReference>
<dbReference type="RefSeq" id="XP_635606.1">
    <property type="nucleotide sequence ID" value="XM_630514.1"/>
</dbReference>
<dbReference type="SMR" id="Q54G11"/>
<dbReference type="FunCoup" id="Q54G11">
    <property type="interactions" value="27"/>
</dbReference>
<dbReference type="STRING" id="44689.Q54G11"/>
<dbReference type="PaxDb" id="44689-DDB0238851"/>
<dbReference type="EnsemblProtists" id="EAL62106">
    <property type="protein sequence ID" value="EAL62106"/>
    <property type="gene ID" value="DDB_G0290491"/>
</dbReference>
<dbReference type="GeneID" id="8627678"/>
<dbReference type="KEGG" id="ddi:DDB_G0290491"/>
<dbReference type="dictyBase" id="DDB_G0290491">
    <property type="gene designation" value="atg8b"/>
</dbReference>
<dbReference type="VEuPathDB" id="AmoebaDB:DDB_G0290491"/>
<dbReference type="eggNOG" id="KOG1654">
    <property type="taxonomic scope" value="Eukaryota"/>
</dbReference>
<dbReference type="HOGENOM" id="CLU_119276_0_1_1"/>
<dbReference type="InParanoid" id="Q54G11"/>
<dbReference type="OMA" id="VYEEHHD"/>
<dbReference type="PhylomeDB" id="Q54G11"/>
<dbReference type="Reactome" id="R-DDI-1632852">
    <property type="pathway name" value="Macroautophagy"/>
</dbReference>
<dbReference type="Reactome" id="R-DDI-5205685">
    <property type="pathway name" value="PINK1-PRKN Mediated Mitophagy"/>
</dbReference>
<dbReference type="Reactome" id="R-DDI-8854214">
    <property type="pathway name" value="TBC/RABGAPs"/>
</dbReference>
<dbReference type="Reactome" id="R-DDI-8934903">
    <property type="pathway name" value="Receptor Mediated Mitophagy"/>
</dbReference>
<dbReference type="Reactome" id="R-DDI-9664873">
    <property type="pathway name" value="Pexophagy"/>
</dbReference>
<dbReference type="Reactome" id="R-DDI-9755511">
    <property type="pathway name" value="KEAP1-NFE2L2 pathway"/>
</dbReference>
<dbReference type="PRO" id="PR:Q54G11"/>
<dbReference type="Proteomes" id="UP000002195">
    <property type="component" value="Chromosome 5"/>
</dbReference>
<dbReference type="GO" id="GO:0005776">
    <property type="term" value="C:autophagosome"/>
    <property type="evidence" value="ECO:0000314"/>
    <property type="project" value="dictyBase"/>
</dbReference>
<dbReference type="GO" id="GO:0000421">
    <property type="term" value="C:autophagosome membrane"/>
    <property type="evidence" value="ECO:0000314"/>
    <property type="project" value="dictyBase"/>
</dbReference>
<dbReference type="GO" id="GO:0008429">
    <property type="term" value="F:phosphatidylethanolamine binding"/>
    <property type="evidence" value="ECO:0000318"/>
    <property type="project" value="GO_Central"/>
</dbReference>
<dbReference type="GO" id="GO:0000045">
    <property type="term" value="P:autophagosome assembly"/>
    <property type="evidence" value="ECO:0000318"/>
    <property type="project" value="GO_Central"/>
</dbReference>
<dbReference type="GO" id="GO:0097352">
    <property type="term" value="P:autophagosome maturation"/>
    <property type="evidence" value="ECO:0000315"/>
    <property type="project" value="dictyBase"/>
</dbReference>
<dbReference type="GO" id="GO:0006995">
    <property type="term" value="P:cellular response to nitrogen starvation"/>
    <property type="evidence" value="ECO:0000318"/>
    <property type="project" value="GO_Central"/>
</dbReference>
<dbReference type="GO" id="GO:0000423">
    <property type="term" value="P:mitophagy"/>
    <property type="evidence" value="ECO:0000318"/>
    <property type="project" value="GO_Central"/>
</dbReference>
<dbReference type="GO" id="GO:0009617">
    <property type="term" value="P:response to bacterium"/>
    <property type="evidence" value="ECO:0007007"/>
    <property type="project" value="dictyBase"/>
</dbReference>
<dbReference type="Gene3D" id="3.10.20.90">
    <property type="entry name" value="Phosphatidylinositol 3-kinase Catalytic Subunit, Chain A, domain 1"/>
    <property type="match status" value="1"/>
</dbReference>
<dbReference type="InterPro" id="IPR004241">
    <property type="entry name" value="Atg8-like"/>
</dbReference>
<dbReference type="InterPro" id="IPR029071">
    <property type="entry name" value="Ubiquitin-like_domsf"/>
</dbReference>
<dbReference type="PANTHER" id="PTHR10969">
    <property type="entry name" value="MICROTUBULE-ASSOCIATED PROTEINS 1A/1B LIGHT CHAIN 3-RELATED"/>
    <property type="match status" value="1"/>
</dbReference>
<dbReference type="Pfam" id="PF02991">
    <property type="entry name" value="ATG8"/>
    <property type="match status" value="1"/>
</dbReference>
<dbReference type="SUPFAM" id="SSF54236">
    <property type="entry name" value="Ubiquitin-like"/>
    <property type="match status" value="1"/>
</dbReference>
<keyword id="KW-0449">Lipoprotein</keyword>
<keyword id="KW-0472">Membrane</keyword>
<keyword id="KW-1185">Reference proteome</keyword>
<feature type="chain" id="PRO_0000388778" description="Autophagy-related protein 8-like protein DDB_G0290491">
    <location>
        <begin position="1"/>
        <end position="123"/>
    </location>
</feature>
<feature type="propeptide" id="PRO_0000388779" description="Removed in mature form" evidence="1">
    <location>
        <begin position="124"/>
        <end position="126"/>
    </location>
</feature>
<feature type="lipid moiety-binding region" description="Phosphatidylethanolamine amidated glycine" evidence="1">
    <location>
        <position position="123"/>
    </location>
</feature>
<organism>
    <name type="scientific">Dictyostelium discoideum</name>
    <name type="common">Social amoeba</name>
    <dbReference type="NCBI Taxonomy" id="44689"/>
    <lineage>
        <taxon>Eukaryota</taxon>
        <taxon>Amoebozoa</taxon>
        <taxon>Evosea</taxon>
        <taxon>Eumycetozoa</taxon>
        <taxon>Dictyostelia</taxon>
        <taxon>Dictyosteliales</taxon>
        <taxon>Dictyosteliaceae</taxon>
        <taxon>Dictyostelium</taxon>
    </lineage>
</organism>
<reference key="1">
    <citation type="journal article" date="2005" name="Nature">
        <title>The genome of the social amoeba Dictyostelium discoideum.</title>
        <authorList>
            <person name="Eichinger L."/>
            <person name="Pachebat J.A."/>
            <person name="Gloeckner G."/>
            <person name="Rajandream M.A."/>
            <person name="Sucgang R."/>
            <person name="Berriman M."/>
            <person name="Song J."/>
            <person name="Olsen R."/>
            <person name="Szafranski K."/>
            <person name="Xu Q."/>
            <person name="Tunggal B."/>
            <person name="Kummerfeld S."/>
            <person name="Madera M."/>
            <person name="Konfortov B.A."/>
            <person name="Rivero F."/>
            <person name="Bankier A.T."/>
            <person name="Lehmann R."/>
            <person name="Hamlin N."/>
            <person name="Davies R."/>
            <person name="Gaudet P."/>
            <person name="Fey P."/>
            <person name="Pilcher K."/>
            <person name="Chen G."/>
            <person name="Saunders D."/>
            <person name="Sodergren E.J."/>
            <person name="Davis P."/>
            <person name="Kerhornou A."/>
            <person name="Nie X."/>
            <person name="Hall N."/>
            <person name="Anjard C."/>
            <person name="Hemphill L."/>
            <person name="Bason N."/>
            <person name="Farbrother P."/>
            <person name="Desany B."/>
            <person name="Just E."/>
            <person name="Morio T."/>
            <person name="Rost R."/>
            <person name="Churcher C.M."/>
            <person name="Cooper J."/>
            <person name="Haydock S."/>
            <person name="van Driessche N."/>
            <person name="Cronin A."/>
            <person name="Goodhead I."/>
            <person name="Muzny D.M."/>
            <person name="Mourier T."/>
            <person name="Pain A."/>
            <person name="Lu M."/>
            <person name="Harper D."/>
            <person name="Lindsay R."/>
            <person name="Hauser H."/>
            <person name="James K.D."/>
            <person name="Quiles M."/>
            <person name="Madan Babu M."/>
            <person name="Saito T."/>
            <person name="Buchrieser C."/>
            <person name="Wardroper A."/>
            <person name="Felder M."/>
            <person name="Thangavelu M."/>
            <person name="Johnson D."/>
            <person name="Knights A."/>
            <person name="Loulseged H."/>
            <person name="Mungall K.L."/>
            <person name="Oliver K."/>
            <person name="Price C."/>
            <person name="Quail M.A."/>
            <person name="Urushihara H."/>
            <person name="Hernandez J."/>
            <person name="Rabbinowitsch E."/>
            <person name="Steffen D."/>
            <person name="Sanders M."/>
            <person name="Ma J."/>
            <person name="Kohara Y."/>
            <person name="Sharp S."/>
            <person name="Simmonds M.N."/>
            <person name="Spiegler S."/>
            <person name="Tivey A."/>
            <person name="Sugano S."/>
            <person name="White B."/>
            <person name="Walker D."/>
            <person name="Woodward J.R."/>
            <person name="Winckler T."/>
            <person name="Tanaka Y."/>
            <person name="Shaulsky G."/>
            <person name="Schleicher M."/>
            <person name="Weinstock G.M."/>
            <person name="Rosenthal A."/>
            <person name="Cox E.C."/>
            <person name="Chisholm R.L."/>
            <person name="Gibbs R.A."/>
            <person name="Loomis W.F."/>
            <person name="Platzer M."/>
            <person name="Kay R.R."/>
            <person name="Williams J.G."/>
            <person name="Dear P.H."/>
            <person name="Noegel A.A."/>
            <person name="Barrell B.G."/>
            <person name="Kuspa A."/>
        </authorList>
    </citation>
    <scope>NUCLEOTIDE SEQUENCE [LARGE SCALE GENOMIC DNA]</scope>
    <source>
        <strain>AX4</strain>
    </source>
</reference>